<feature type="chain" id="PRO_0000262576" description="Type IV secretion system protein PtlE">
    <location>
        <begin position="1"/>
        <end position="233"/>
    </location>
</feature>
<feature type="transmembrane region" description="Helical" evidence="1">
    <location>
        <begin position="42"/>
        <end position="62"/>
    </location>
</feature>
<feature type="mutagenesis site" description="Strong reduction of PTX secretion. Even stronger reduction of PTX secretion; when associated with A-19." evidence="3">
    <original>D</original>
    <variation>A</variation>
    <location>
        <position position="10"/>
    </location>
</feature>
<feature type="mutagenesis site" description="Strong reduction of PTX secretion. Slightly stronger reduction of PTX secretion; when associated with A-10." evidence="3">
    <original>E</original>
    <variation>A</variation>
    <location>
        <position position="19"/>
    </location>
</feature>
<protein>
    <recommendedName>
        <fullName>Type IV secretion system protein PtlE</fullName>
    </recommendedName>
    <alternativeName>
        <fullName>Pertussis toxin liberation protein E</fullName>
    </alternativeName>
</protein>
<comment type="function">
    <text evidence="2 3 4 5">Component of the type IV secretion system ptl required for secretion of assembled pertussis toxin (PTX) through the outer membrane. Could possess peptidoglycanase activity.</text>
</comment>
<comment type="subcellular location">
    <subcellularLocation>
        <location evidence="6">Cell inner membrane</location>
        <topology evidence="6">Single-pass membrane protein</topology>
    </subcellularLocation>
</comment>
<comment type="induction">
    <text>Cotranscribed with ptxABCDE. Activated by the two-component regulatory system BvgS/BvgA.</text>
</comment>
<comment type="similarity">
    <text evidence="6">Belongs to the virB8 family.</text>
</comment>
<organism>
    <name type="scientific">Bordetella pertussis (strain Tohama I / ATCC BAA-589 / NCTC 13251)</name>
    <dbReference type="NCBI Taxonomy" id="257313"/>
    <lineage>
        <taxon>Bacteria</taxon>
        <taxon>Pseudomonadati</taxon>
        <taxon>Pseudomonadota</taxon>
        <taxon>Betaproteobacteria</taxon>
        <taxon>Burkholderiales</taxon>
        <taxon>Alcaligenaceae</taxon>
        <taxon>Bordetella</taxon>
    </lineage>
</organism>
<keyword id="KW-0997">Cell inner membrane</keyword>
<keyword id="KW-1003">Cell membrane</keyword>
<keyword id="KW-0472">Membrane</keyword>
<keyword id="KW-1185">Reference proteome</keyword>
<keyword id="KW-0812">Transmembrane</keyword>
<keyword id="KW-1133">Transmembrane helix</keyword>
<keyword id="KW-0813">Transport</keyword>
<sequence>MPDPRPLTPDQTHGRGHAEAAVDWEASRLYRLAQSERRAWTVAWAALAVTALSLIAIATMLPLKTTIPYLIEVEKSSGAASVVTQFEPRDFTPDTLMNQYWLTRYVAARERYDWHTIQHDYDYVRLLSAPAVRHDYETSYEAPDAPDRKYGAGTTLAVKILSAIDHGKGVGTVRFVRTRRDADGQGAAESSIWVATVAFAYDQPRALTQAQRWLNPLGFAVTSYRVDAEAGQP</sequence>
<evidence type="ECO:0000255" key="1"/>
<evidence type="ECO:0000269" key="2">
    <source>
    </source>
</evidence>
<evidence type="ECO:0000269" key="3">
    <source>
    </source>
</evidence>
<evidence type="ECO:0000269" key="4">
    <source>
    </source>
</evidence>
<evidence type="ECO:0000269" key="5">
    <source>
    </source>
</evidence>
<evidence type="ECO:0000305" key="6"/>
<reference key="1">
    <citation type="journal article" date="1993" name="Proc. Natl. Acad. Sci. U.S.A.">
        <title>Molecular characterization of an operon required for pertussis toxin secretion.</title>
        <authorList>
            <person name="Weiss A.A."/>
            <person name="Johnson F.D."/>
            <person name="Burns D.L."/>
        </authorList>
    </citation>
    <scope>NUCLEOTIDE SEQUENCE [GENOMIC DNA]</scope>
    <scope>FUNCTION</scope>
    <source>
        <strain>Tohama I / BP338</strain>
    </source>
</reference>
<reference key="2">
    <citation type="journal article" date="2003" name="Nat. Genet.">
        <title>Comparative analysis of the genome sequences of Bordetella pertussis, Bordetella parapertussis and Bordetella bronchiseptica.</title>
        <authorList>
            <person name="Parkhill J."/>
            <person name="Sebaihia M."/>
            <person name="Preston A."/>
            <person name="Murphy L.D."/>
            <person name="Thomson N.R."/>
            <person name="Harris D.E."/>
            <person name="Holden M.T.G."/>
            <person name="Churcher C.M."/>
            <person name="Bentley S.D."/>
            <person name="Mungall K.L."/>
            <person name="Cerdeno-Tarraga A.-M."/>
            <person name="Temple L."/>
            <person name="James K.D."/>
            <person name="Harris B."/>
            <person name="Quail M.A."/>
            <person name="Achtman M."/>
            <person name="Atkin R."/>
            <person name="Baker S."/>
            <person name="Basham D."/>
            <person name="Bason N."/>
            <person name="Cherevach I."/>
            <person name="Chillingworth T."/>
            <person name="Collins M."/>
            <person name="Cronin A."/>
            <person name="Davis P."/>
            <person name="Doggett J."/>
            <person name="Feltwell T."/>
            <person name="Goble A."/>
            <person name="Hamlin N."/>
            <person name="Hauser H."/>
            <person name="Holroyd S."/>
            <person name="Jagels K."/>
            <person name="Leather S."/>
            <person name="Moule S."/>
            <person name="Norberczak H."/>
            <person name="O'Neil S."/>
            <person name="Ormond D."/>
            <person name="Price C."/>
            <person name="Rabbinowitsch E."/>
            <person name="Rutter S."/>
            <person name="Sanders M."/>
            <person name="Saunders D."/>
            <person name="Seeger K."/>
            <person name="Sharp S."/>
            <person name="Simmonds M."/>
            <person name="Skelton J."/>
            <person name="Squares R."/>
            <person name="Squares S."/>
            <person name="Stevens K."/>
            <person name="Unwin L."/>
            <person name="Whitehead S."/>
            <person name="Barrell B.G."/>
            <person name="Maskell D.J."/>
        </authorList>
    </citation>
    <scope>NUCLEOTIDE SEQUENCE [LARGE SCALE GENOMIC DNA]</scope>
    <source>
        <strain>Tohama I / ATCC BAA-589 / NCTC 13251</strain>
    </source>
</reference>
<reference key="3">
    <citation type="journal article" date="1994" name="J. Bacteriol.">
        <title>Detection and subcellular localization of three Ptl proteins involved in the secretion of pertussis toxin from Bordetella pertussis.</title>
        <authorList>
            <person name="Johnson F.D."/>
            <person name="Burns D.L."/>
        </authorList>
    </citation>
    <scope>SUBCELLULAR LOCATION</scope>
    <source>
        <strain>Tohama I / BP338</strain>
    </source>
</reference>
<reference key="4">
    <citation type="journal article" date="1995" name="J. Bacteriol.">
        <title>Synergistic binding of RNA polymerase and BvgA phosphate to the pertussis toxin promoter of Bordetella pertussis.</title>
        <authorList>
            <person name="Boucher P.E."/>
            <person name="Stibitz S."/>
        </authorList>
    </citation>
    <scope>REGULATION BY BVGS/BVGA</scope>
    <source>
        <strain>Tohama I / ATCC BAA-589 / NCTC 13251</strain>
    </source>
</reference>
<reference key="5">
    <citation type="journal article" date="1996" name="Infect. Immun.">
        <title>The pertussis toxin liberation genes of Bordetella pertussis are transcriptionally linked to the pertussis toxin operon.</title>
        <authorList>
            <person name="Ricci S."/>
            <person name="Rappuoli R."/>
            <person name="Scarlato V."/>
        </authorList>
    </citation>
    <scope>COTRANSCRIPTION WITH PTX</scope>
    <source>
        <strain>Wellcome 28</strain>
    </source>
</reference>
<reference key="6">
    <citation type="journal article" date="1999" name="FEMS Microbiol. Lett.">
        <title>Mutants in the ptlA-H genes of Bordetella pertussis are deficient for pertussis toxin secretion.</title>
        <authorList>
            <person name="Craig-Mylius K.A."/>
            <person name="Weiss A.A."/>
        </authorList>
    </citation>
    <scope>FUNCTION</scope>
    <source>
        <strain>Tohama I / BP338</strain>
    </source>
</reference>
<reference key="7">
    <citation type="journal article" date="2002" name="J. Bacteriol.">
        <title>The PtlE protein of Bordetella pertussis has peptidoglycanase activity required for Ptl-mediated pertussis toxin secretion.</title>
        <authorList>
            <person name="Rambow-Larsen A.A."/>
            <person name="Weiss A.A."/>
        </authorList>
    </citation>
    <scope>FUNCTION AS A POSSIBLE PEPTIDOGLYCANASE</scope>
    <scope>MUTAGENESIS OF ASP-10 AND GLU-19</scope>
    <source>
        <strain>Tohama I / BP338</strain>
    </source>
</reference>
<reference key="8">
    <citation type="journal article" date="2004" name="Infect. Immun.">
        <title>Analysis of subassemblies of pertussis toxin subunits in vivo and their interaction with the ptl transport apparatus.</title>
        <authorList>
            <person name="Burns D.L."/>
            <person name="Fiddner S."/>
            <person name="Cheung A.M."/>
            <person name="Verma A."/>
        </authorList>
    </citation>
    <scope>FUNCTION</scope>
    <source>
        <strain>Tohama I / BP338</strain>
    </source>
</reference>
<name>PTLE_BORPE</name>
<dbReference type="EMBL" id="L10720">
    <property type="status" value="NOT_ANNOTATED_CDS"/>
    <property type="molecule type" value="Genomic_DNA"/>
</dbReference>
<dbReference type="EMBL" id="BX640422">
    <property type="protein sequence ID" value="CAE44048.1"/>
    <property type="molecule type" value="Genomic_DNA"/>
</dbReference>
<dbReference type="RefSeq" id="NP_882292.1">
    <property type="nucleotide sequence ID" value="NC_002929.2"/>
</dbReference>
<dbReference type="RefSeq" id="WP_010929498.1">
    <property type="nucleotide sequence ID" value="NZ_CP039022.1"/>
</dbReference>
<dbReference type="SMR" id="Q7VSX6"/>
<dbReference type="STRING" id="257313.BP3793"/>
<dbReference type="PaxDb" id="257313-BP3793"/>
<dbReference type="GeneID" id="93206112"/>
<dbReference type="KEGG" id="bpe:BP3793"/>
<dbReference type="PATRIC" id="fig|257313.5.peg.4097"/>
<dbReference type="eggNOG" id="COG3736">
    <property type="taxonomic scope" value="Bacteria"/>
</dbReference>
<dbReference type="HOGENOM" id="CLU_068461_1_1_4"/>
<dbReference type="Proteomes" id="UP000002676">
    <property type="component" value="Chromosome"/>
</dbReference>
<dbReference type="GO" id="GO:0005886">
    <property type="term" value="C:plasma membrane"/>
    <property type="evidence" value="ECO:0007669"/>
    <property type="project" value="UniProtKB-SubCell"/>
</dbReference>
<dbReference type="GO" id="GO:0030255">
    <property type="term" value="P:protein secretion by the type IV secretion system"/>
    <property type="evidence" value="ECO:0007669"/>
    <property type="project" value="InterPro"/>
</dbReference>
<dbReference type="CDD" id="cd16424">
    <property type="entry name" value="VirB8"/>
    <property type="match status" value="1"/>
</dbReference>
<dbReference type="Gene3D" id="3.10.450.230">
    <property type="entry name" value="VirB8 protein"/>
    <property type="match status" value="1"/>
</dbReference>
<dbReference type="InterPro" id="IPR032710">
    <property type="entry name" value="NTF2-like_dom_sf"/>
</dbReference>
<dbReference type="InterPro" id="IPR007430">
    <property type="entry name" value="VirB8"/>
</dbReference>
<dbReference type="InterPro" id="IPR026264">
    <property type="entry name" value="VirB8/PtlE"/>
</dbReference>
<dbReference type="Pfam" id="PF04335">
    <property type="entry name" value="VirB8"/>
    <property type="match status" value="1"/>
</dbReference>
<dbReference type="PIRSF" id="PIRSF003299">
    <property type="entry name" value="VirB8_PtlE"/>
    <property type="match status" value="1"/>
</dbReference>
<dbReference type="SUPFAM" id="SSF54427">
    <property type="entry name" value="NTF2-like"/>
    <property type="match status" value="1"/>
</dbReference>
<gene>
    <name type="primary">ptlE</name>
    <name type="ordered locus">BP3793</name>
</gene>
<accession>Q7VSX6</accession>
<proteinExistence type="evidence at protein level"/>